<sequence length="252" mass="27617">MDMKGTYLVTVILLVSTLSVGMCSNGWIRAHATYYGVNDSPASLGGACGYDNPYHAGFGAHTAALSGELFRSGESCGGCYQVRCDFPADPKWCLRGAAVTVTATNFCPTNNNNGWCNLPRHHFDMSSPAFFRIARRGNEGIVPVFYRRVGCKRRGGVRFTMRGQGNFNMVMISNVGGGGSVRSVAVRGSKGKTWLQMTRNWGANWQSSGDLRGQRLSFKVTLTDSKTQTFLNVVPSSWWFGQTFSSRGRQFV</sequence>
<gene>
    <name type="primary">EXPA12</name>
    <name type="synonym">EXP12</name>
    <name type="ordered locus">At3g15370</name>
    <name type="ORF">MJK13.3</name>
</gene>
<comment type="function">
    <text evidence="1">Causes loosening and extension of plant cell walls by disrupting non-covalent bonding between cellulose microfibrils and matrix glucans. No enzymatic activity has been found (By similarity).</text>
</comment>
<comment type="subcellular location">
    <subcellularLocation>
        <location>Secreted</location>
        <location>Cell wall</location>
    </subcellularLocation>
    <subcellularLocation>
        <location>Membrane</location>
        <topology>Peripheral membrane protein</topology>
    </subcellularLocation>
</comment>
<comment type="similarity">
    <text evidence="5">Belongs to the expansin family. Expansin A subfamily.</text>
</comment>
<comment type="online information" name="EXPANSIN homepage">
    <link uri="https://www.dept.psu.edu/biology/groups/expansins/index.htm"/>
</comment>
<organism>
    <name type="scientific">Arabidopsis thaliana</name>
    <name type="common">Mouse-ear cress</name>
    <dbReference type="NCBI Taxonomy" id="3702"/>
    <lineage>
        <taxon>Eukaryota</taxon>
        <taxon>Viridiplantae</taxon>
        <taxon>Streptophyta</taxon>
        <taxon>Embryophyta</taxon>
        <taxon>Tracheophyta</taxon>
        <taxon>Spermatophyta</taxon>
        <taxon>Magnoliopsida</taxon>
        <taxon>eudicotyledons</taxon>
        <taxon>Gunneridae</taxon>
        <taxon>Pentapetalae</taxon>
        <taxon>rosids</taxon>
        <taxon>malvids</taxon>
        <taxon>Brassicales</taxon>
        <taxon>Brassicaceae</taxon>
        <taxon>Camelineae</taxon>
        <taxon>Arabidopsis</taxon>
    </lineage>
</organism>
<feature type="signal peptide" evidence="2">
    <location>
        <begin position="1"/>
        <end position="23"/>
    </location>
</feature>
<feature type="chain" id="PRO_0000008693" description="Expansin-A12">
    <location>
        <begin position="24"/>
        <end position="252"/>
    </location>
</feature>
<feature type="domain" description="Expansin-like EG45" evidence="4">
    <location>
        <begin position="45"/>
        <end position="156"/>
    </location>
</feature>
<feature type="domain" description="Expansin-like CBD" evidence="3">
    <location>
        <begin position="166"/>
        <end position="246"/>
    </location>
</feature>
<dbReference type="EMBL" id="AB022218">
    <property type="protein sequence ID" value="BAB02366.1"/>
    <property type="molecule type" value="Genomic_DNA"/>
</dbReference>
<dbReference type="EMBL" id="AC024081">
    <property type="protein sequence ID" value="AAF35403.1"/>
    <property type="molecule type" value="Genomic_DNA"/>
</dbReference>
<dbReference type="EMBL" id="CP002686">
    <property type="protein sequence ID" value="AEE75660.1"/>
    <property type="molecule type" value="Genomic_DNA"/>
</dbReference>
<dbReference type="EMBL" id="BT010937">
    <property type="protein sequence ID" value="AAR24715.1"/>
    <property type="molecule type" value="mRNA"/>
</dbReference>
<dbReference type="EMBL" id="BT011653">
    <property type="protein sequence ID" value="AAS47659.1"/>
    <property type="molecule type" value="mRNA"/>
</dbReference>
<dbReference type="RefSeq" id="NP_188156.1">
    <property type="nucleotide sequence ID" value="NM_112405.3"/>
</dbReference>
<dbReference type="SMR" id="Q9LDJ3"/>
<dbReference type="BioGRID" id="6110">
    <property type="interactions" value="1"/>
</dbReference>
<dbReference type="STRING" id="3702.Q9LDJ3"/>
<dbReference type="PaxDb" id="3702-AT3G15370.1"/>
<dbReference type="EnsemblPlants" id="AT3G15370.1">
    <property type="protein sequence ID" value="AT3G15370.1"/>
    <property type="gene ID" value="AT3G15370"/>
</dbReference>
<dbReference type="GeneID" id="820776"/>
<dbReference type="Gramene" id="AT3G15370.1">
    <property type="protein sequence ID" value="AT3G15370.1"/>
    <property type="gene ID" value="AT3G15370"/>
</dbReference>
<dbReference type="KEGG" id="ath:AT3G15370"/>
<dbReference type="Araport" id="AT3G15370"/>
<dbReference type="TAIR" id="AT3G15370">
    <property type="gene designation" value="EXPA12"/>
</dbReference>
<dbReference type="eggNOG" id="ENOG502QSIV">
    <property type="taxonomic scope" value="Eukaryota"/>
</dbReference>
<dbReference type="HOGENOM" id="CLU_027462_0_3_1"/>
<dbReference type="InParanoid" id="Q9LDJ3"/>
<dbReference type="OMA" id="AMHRNWG"/>
<dbReference type="PhylomeDB" id="Q9LDJ3"/>
<dbReference type="PRO" id="PR:Q9LDJ3"/>
<dbReference type="Proteomes" id="UP000006548">
    <property type="component" value="Chromosome 3"/>
</dbReference>
<dbReference type="ExpressionAtlas" id="Q9LDJ3">
    <property type="expression patterns" value="baseline and differential"/>
</dbReference>
<dbReference type="GO" id="GO:0005576">
    <property type="term" value="C:extracellular region"/>
    <property type="evidence" value="ECO:0007669"/>
    <property type="project" value="UniProtKB-KW"/>
</dbReference>
<dbReference type="GO" id="GO:0016020">
    <property type="term" value="C:membrane"/>
    <property type="evidence" value="ECO:0007669"/>
    <property type="project" value="UniProtKB-SubCell"/>
</dbReference>
<dbReference type="GO" id="GO:0009653">
    <property type="term" value="P:anatomical structure morphogenesis"/>
    <property type="evidence" value="ECO:0007669"/>
    <property type="project" value="UniProtKB-ARBA"/>
</dbReference>
<dbReference type="GO" id="GO:0009828">
    <property type="term" value="P:plant-type cell wall loosening"/>
    <property type="evidence" value="ECO:0000250"/>
    <property type="project" value="UniProtKB"/>
</dbReference>
<dbReference type="CDD" id="cd22274">
    <property type="entry name" value="DPBB_EXPA_N"/>
    <property type="match status" value="1"/>
</dbReference>
<dbReference type="Gene3D" id="2.60.40.760">
    <property type="entry name" value="Expansin, cellulose-binding-like domain"/>
    <property type="match status" value="1"/>
</dbReference>
<dbReference type="Gene3D" id="2.40.40.10">
    <property type="entry name" value="RlpA-like domain"/>
    <property type="match status" value="1"/>
</dbReference>
<dbReference type="InterPro" id="IPR007118">
    <property type="entry name" value="Expan_Lol_pI"/>
</dbReference>
<dbReference type="InterPro" id="IPR002963">
    <property type="entry name" value="Expansin"/>
</dbReference>
<dbReference type="InterPro" id="IPR007112">
    <property type="entry name" value="Expansin/allergen_DPBB_dom"/>
</dbReference>
<dbReference type="InterPro" id="IPR007117">
    <property type="entry name" value="Expansin_CBD"/>
</dbReference>
<dbReference type="InterPro" id="IPR036749">
    <property type="entry name" value="Expansin_CBD_sf"/>
</dbReference>
<dbReference type="InterPro" id="IPR009009">
    <property type="entry name" value="RlpA-like_DPBB"/>
</dbReference>
<dbReference type="InterPro" id="IPR036908">
    <property type="entry name" value="RlpA-like_sf"/>
</dbReference>
<dbReference type="PANTHER" id="PTHR31867">
    <property type="entry name" value="EXPANSIN-A15"/>
    <property type="match status" value="1"/>
</dbReference>
<dbReference type="Pfam" id="PF03330">
    <property type="entry name" value="DPBB_1"/>
    <property type="match status" value="1"/>
</dbReference>
<dbReference type="Pfam" id="PF01357">
    <property type="entry name" value="Expansin_C"/>
    <property type="match status" value="1"/>
</dbReference>
<dbReference type="PRINTS" id="PR01226">
    <property type="entry name" value="EXPANSIN"/>
</dbReference>
<dbReference type="PRINTS" id="PR01225">
    <property type="entry name" value="EXPANSNFAMLY"/>
</dbReference>
<dbReference type="SMART" id="SM00837">
    <property type="entry name" value="DPBB_1"/>
    <property type="match status" value="1"/>
</dbReference>
<dbReference type="SUPFAM" id="SSF50685">
    <property type="entry name" value="Barwin-like endoglucanases"/>
    <property type="match status" value="1"/>
</dbReference>
<dbReference type="SUPFAM" id="SSF49590">
    <property type="entry name" value="PHL pollen allergen"/>
    <property type="match status" value="1"/>
</dbReference>
<dbReference type="PROSITE" id="PS50843">
    <property type="entry name" value="EXPANSIN_CBD"/>
    <property type="match status" value="1"/>
</dbReference>
<dbReference type="PROSITE" id="PS50842">
    <property type="entry name" value="EXPANSIN_EG45"/>
    <property type="match status" value="1"/>
</dbReference>
<evidence type="ECO:0000250" key="1"/>
<evidence type="ECO:0000255" key="2"/>
<evidence type="ECO:0000255" key="3">
    <source>
        <dbReference type="PROSITE-ProRule" id="PRU00078"/>
    </source>
</evidence>
<evidence type="ECO:0000255" key="4">
    <source>
        <dbReference type="PROSITE-ProRule" id="PRU00079"/>
    </source>
</evidence>
<evidence type="ECO:0000305" key="5"/>
<accession>Q9LDJ3</accession>
<accession>Q53XE5</accession>
<proteinExistence type="evidence at transcript level"/>
<keyword id="KW-0134">Cell wall</keyword>
<keyword id="KW-0961">Cell wall biogenesis/degradation</keyword>
<keyword id="KW-0472">Membrane</keyword>
<keyword id="KW-1185">Reference proteome</keyword>
<keyword id="KW-0964">Secreted</keyword>
<keyword id="KW-0732">Signal</keyword>
<name>EXP12_ARATH</name>
<protein>
    <recommendedName>
        <fullName>Expansin-A12</fullName>
        <shortName>AtEXPA12</shortName>
    </recommendedName>
    <alternativeName>
        <fullName>Alpha-expansin-12</fullName>
        <shortName>At-EXP12</shortName>
        <shortName>AtEx12</shortName>
    </alternativeName>
    <alternativeName>
        <fullName>Ath-ExpAlpha-1.24</fullName>
    </alternativeName>
    <alternativeName>
        <fullName>Expansin-S2</fullName>
    </alternativeName>
</protein>
<reference key="1">
    <citation type="journal article" date="2000" name="DNA Res.">
        <title>Structural analysis of Arabidopsis thaliana chromosome 3. I. Sequence features of the regions of 4,504,864 bp covered by sixty P1 and TAC clones.</title>
        <authorList>
            <person name="Sato S."/>
            <person name="Nakamura Y."/>
            <person name="Kaneko T."/>
            <person name="Katoh T."/>
            <person name="Asamizu E."/>
            <person name="Tabata S."/>
        </authorList>
    </citation>
    <scope>NUCLEOTIDE SEQUENCE [LARGE SCALE GENOMIC DNA]</scope>
    <source>
        <strain>cv. Columbia</strain>
    </source>
</reference>
<reference key="2">
    <citation type="journal article" date="2000" name="Nature">
        <title>Sequence and analysis of chromosome 3 of the plant Arabidopsis thaliana.</title>
        <authorList>
            <person name="Salanoubat M."/>
            <person name="Lemcke K."/>
            <person name="Rieger M."/>
            <person name="Ansorge W."/>
            <person name="Unseld M."/>
            <person name="Fartmann B."/>
            <person name="Valle G."/>
            <person name="Bloecker H."/>
            <person name="Perez-Alonso M."/>
            <person name="Obermaier B."/>
            <person name="Delseny M."/>
            <person name="Boutry M."/>
            <person name="Grivell L.A."/>
            <person name="Mache R."/>
            <person name="Puigdomenech P."/>
            <person name="De Simone V."/>
            <person name="Choisne N."/>
            <person name="Artiguenave F."/>
            <person name="Robert C."/>
            <person name="Brottier P."/>
            <person name="Wincker P."/>
            <person name="Cattolico L."/>
            <person name="Weissenbach J."/>
            <person name="Saurin W."/>
            <person name="Quetier F."/>
            <person name="Schaefer M."/>
            <person name="Mueller-Auer S."/>
            <person name="Gabel C."/>
            <person name="Fuchs M."/>
            <person name="Benes V."/>
            <person name="Wurmbach E."/>
            <person name="Drzonek H."/>
            <person name="Erfle H."/>
            <person name="Jordan N."/>
            <person name="Bangert S."/>
            <person name="Wiedelmann R."/>
            <person name="Kranz H."/>
            <person name="Voss H."/>
            <person name="Holland R."/>
            <person name="Brandt P."/>
            <person name="Nyakatura G."/>
            <person name="Vezzi A."/>
            <person name="D'Angelo M."/>
            <person name="Pallavicini A."/>
            <person name="Toppo S."/>
            <person name="Simionati B."/>
            <person name="Conrad A."/>
            <person name="Hornischer K."/>
            <person name="Kauer G."/>
            <person name="Loehnert T.-H."/>
            <person name="Nordsiek G."/>
            <person name="Reichelt J."/>
            <person name="Scharfe M."/>
            <person name="Schoen O."/>
            <person name="Bargues M."/>
            <person name="Terol J."/>
            <person name="Climent J."/>
            <person name="Navarro P."/>
            <person name="Collado C."/>
            <person name="Perez-Perez A."/>
            <person name="Ottenwaelder B."/>
            <person name="Duchemin D."/>
            <person name="Cooke R."/>
            <person name="Laudie M."/>
            <person name="Berger-Llauro C."/>
            <person name="Purnelle B."/>
            <person name="Masuy D."/>
            <person name="de Haan M."/>
            <person name="Maarse A.C."/>
            <person name="Alcaraz J.-P."/>
            <person name="Cottet A."/>
            <person name="Casacuberta E."/>
            <person name="Monfort A."/>
            <person name="Argiriou A."/>
            <person name="Flores M."/>
            <person name="Liguori R."/>
            <person name="Vitale D."/>
            <person name="Mannhaupt G."/>
            <person name="Haase D."/>
            <person name="Schoof H."/>
            <person name="Rudd S."/>
            <person name="Zaccaria P."/>
            <person name="Mewes H.-W."/>
            <person name="Mayer K.F.X."/>
            <person name="Kaul S."/>
            <person name="Town C.D."/>
            <person name="Koo H.L."/>
            <person name="Tallon L.J."/>
            <person name="Jenkins J."/>
            <person name="Rooney T."/>
            <person name="Rizzo M."/>
            <person name="Walts A."/>
            <person name="Utterback T."/>
            <person name="Fujii C.Y."/>
            <person name="Shea T.P."/>
            <person name="Creasy T.H."/>
            <person name="Haas B."/>
            <person name="Maiti R."/>
            <person name="Wu D."/>
            <person name="Peterson J."/>
            <person name="Van Aken S."/>
            <person name="Pai G."/>
            <person name="Militscher J."/>
            <person name="Sellers P."/>
            <person name="Gill J.E."/>
            <person name="Feldblyum T.V."/>
            <person name="Preuss D."/>
            <person name="Lin X."/>
            <person name="Nierman W.C."/>
            <person name="Salzberg S.L."/>
            <person name="White O."/>
            <person name="Venter J.C."/>
            <person name="Fraser C.M."/>
            <person name="Kaneko T."/>
            <person name="Nakamura Y."/>
            <person name="Sato S."/>
            <person name="Kato T."/>
            <person name="Asamizu E."/>
            <person name="Sasamoto S."/>
            <person name="Kimura T."/>
            <person name="Idesawa K."/>
            <person name="Kawashima K."/>
            <person name="Kishida Y."/>
            <person name="Kiyokawa C."/>
            <person name="Kohara M."/>
            <person name="Matsumoto M."/>
            <person name="Matsuno A."/>
            <person name="Muraki A."/>
            <person name="Nakayama S."/>
            <person name="Nakazaki N."/>
            <person name="Shinpo S."/>
            <person name="Takeuchi C."/>
            <person name="Wada T."/>
            <person name="Watanabe A."/>
            <person name="Yamada M."/>
            <person name="Yasuda M."/>
            <person name="Tabata S."/>
        </authorList>
    </citation>
    <scope>NUCLEOTIDE SEQUENCE [LARGE SCALE GENOMIC DNA]</scope>
    <source>
        <strain>cv. Columbia</strain>
    </source>
</reference>
<reference key="3">
    <citation type="journal article" date="2017" name="Plant J.">
        <title>Araport11: a complete reannotation of the Arabidopsis thaliana reference genome.</title>
        <authorList>
            <person name="Cheng C.Y."/>
            <person name="Krishnakumar V."/>
            <person name="Chan A.P."/>
            <person name="Thibaud-Nissen F."/>
            <person name="Schobel S."/>
            <person name="Town C.D."/>
        </authorList>
    </citation>
    <scope>GENOME REANNOTATION</scope>
    <source>
        <strain>cv. Columbia</strain>
    </source>
</reference>
<reference key="4">
    <citation type="submission" date="2004-02" db="EMBL/GenBank/DDBJ databases">
        <title>Arabidopsis ORF clones.</title>
        <authorList>
            <person name="Kim C.J."/>
            <person name="Chen H."/>
            <person name="Cheuk R.F."/>
            <person name="Shinn P."/>
            <person name="Ecker J.R."/>
        </authorList>
    </citation>
    <scope>NUCLEOTIDE SEQUENCE [LARGE SCALE MRNA]</scope>
    <source>
        <strain>cv. Columbia</strain>
    </source>
</reference>
<reference key="5">
    <citation type="journal article" date="2004" name="Plant Mol. Biol.">
        <title>Nomenclature for members of the expansin superfamily of genes and proteins.</title>
        <authorList>
            <person name="Kende H."/>
            <person name="Bradford K.J."/>
            <person name="Brummell D.A."/>
            <person name="Cho H.-T."/>
            <person name="Cosgrove D.J."/>
            <person name="Fleming A.J."/>
            <person name="Gehring C."/>
            <person name="Lee Y."/>
            <person name="McQueen-Mason S.J."/>
            <person name="Rose J.K.C."/>
            <person name="Voesenek L.A.C."/>
        </authorList>
    </citation>
    <scope>NOMENCLATURE</scope>
</reference>